<organism>
    <name type="scientific">Mycobacterium bovis (strain BCG / Pasteur 1173P2)</name>
    <dbReference type="NCBI Taxonomy" id="410289"/>
    <lineage>
        <taxon>Bacteria</taxon>
        <taxon>Bacillati</taxon>
        <taxon>Actinomycetota</taxon>
        <taxon>Actinomycetes</taxon>
        <taxon>Mycobacteriales</taxon>
        <taxon>Mycobacteriaceae</taxon>
        <taxon>Mycobacterium</taxon>
        <taxon>Mycobacterium tuberculosis complex</taxon>
    </lineage>
</organism>
<sequence>MDFVIQWSCYLLAFLGGSAVAWVVVTLSIKRASRDEGAAEAPSAAETGAQ</sequence>
<gene>
    <name type="primary">arfB</name>
    <name type="ordered locus">BCG_0952</name>
</gene>
<evidence type="ECO:0000250" key="1"/>
<evidence type="ECO:0000255" key="2"/>
<evidence type="ECO:0000269" key="3">
    <source>
    </source>
</evidence>
<evidence type="ECO:0000305" key="4"/>
<feature type="chain" id="PRO_0000415886" description="Uncharacterized membrane protein ArfB">
    <location>
        <begin position="1"/>
        <end position="50"/>
    </location>
</feature>
<feature type="transmembrane region" description="Helical" evidence="2">
    <location>
        <begin position="9"/>
        <end position="29"/>
    </location>
</feature>
<proteinExistence type="evidence at transcript level"/>
<keyword id="KW-1003">Cell membrane</keyword>
<keyword id="KW-0472">Membrane</keyword>
<keyword id="KW-0812">Transmembrane</keyword>
<keyword id="KW-1133">Transmembrane helix</keyword>
<name>ARFB_MYCBP</name>
<reference key="1">
    <citation type="journal article" date="2007" name="Proc. Natl. Acad. Sci. U.S.A.">
        <title>Genome plasticity of BCG and impact on vaccine efficacy.</title>
        <authorList>
            <person name="Brosch R."/>
            <person name="Gordon S.V."/>
            <person name="Garnier T."/>
            <person name="Eiglmeier K."/>
            <person name="Frigui W."/>
            <person name="Valenti P."/>
            <person name="Dos Santos S."/>
            <person name="Duthoy S."/>
            <person name="Lacroix C."/>
            <person name="Garcia-Pelayo C."/>
            <person name="Inwald J.K."/>
            <person name="Golby P."/>
            <person name="Garcia J.N."/>
            <person name="Hewinson R.G."/>
            <person name="Behr M.A."/>
            <person name="Quail M.A."/>
            <person name="Churcher C."/>
            <person name="Barrell B.G."/>
            <person name="Parkhill J."/>
            <person name="Cole S.T."/>
        </authorList>
    </citation>
    <scope>NUCLEOTIDE SEQUENCE [LARGE SCALE GENOMIC DNA]</scope>
    <source>
        <strain>BCG / Pasteur 1173P2</strain>
    </source>
</reference>
<reference key="2">
    <citation type="journal article" date="2011" name="Tuberculosis">
        <title>Expression of OmpATb is dependent on small membrane proteins in Mycobacterium bovis BCG.</title>
        <authorList>
            <person name="Veyron-Churlet R."/>
            <person name="Brust B."/>
            <person name="Kremer L."/>
            <person name="Blanc-Potard A.B."/>
        </authorList>
    </citation>
    <scope>FUNCTION</scope>
    <scope>INDUCTION</scope>
    <scope>DISRUPTION PHENOTYPE</scope>
    <source>
        <strain>BCG / Pasteur 1173P2</strain>
    </source>
</reference>
<comment type="function">
    <text evidence="1 3">Required for ammonia secretion (By similarity). Also required for wild-type expression of ArfA.</text>
</comment>
<comment type="subcellular location">
    <subcellularLocation>
        <location evidence="4">Cell membrane</location>
        <topology evidence="4">Single-pass membrane protein</topology>
    </subcellularLocation>
</comment>
<comment type="induction">
    <text evidence="3">Expressed equally at pH 5.5 and 7.2. Part of the arfA-arfB-arfC operon.</text>
</comment>
<comment type="disruption phenotype">
    <text evidence="3">No effect of a single gene deletion on growth at pH 7.0 nor of whole-operon deletion on growth at pH 4.6, 5.5 or 7.2. No effect of whole-operon deletion on growth in macrophages. Loss of expression of ArfA.</text>
</comment>
<comment type="similarity">
    <text evidence="4">Belongs to the ArfB membrane protein family.</text>
</comment>
<protein>
    <recommendedName>
        <fullName>Uncharacterized membrane protein ArfB</fullName>
    </recommendedName>
</protein>
<dbReference type="EMBL" id="AM408590">
    <property type="protein sequence ID" value="CAL70938.1"/>
    <property type="molecule type" value="Genomic_DNA"/>
</dbReference>
<dbReference type="RefSeq" id="WP_003404687.1">
    <property type="nucleotide sequence ID" value="NC_008769.1"/>
</dbReference>
<dbReference type="SMR" id="A1KH32"/>
<dbReference type="KEGG" id="mbb:BCG_0952"/>
<dbReference type="HOGENOM" id="CLU_214389_0_0_11"/>
<dbReference type="Proteomes" id="UP000001472">
    <property type="component" value="Chromosome"/>
</dbReference>
<dbReference type="GO" id="GO:0005886">
    <property type="term" value="C:plasma membrane"/>
    <property type="evidence" value="ECO:0007669"/>
    <property type="project" value="UniProtKB-SubCell"/>
</dbReference>
<accession>A1KH32</accession>